<comment type="function">
    <text evidence="1">Catalyzes the hydrolysis of the amide bond of N(2)-acetylated L-amino acids. Cleaves the acetyl group from N-acetyl-L-ornithine to form L-ornithine, an intermediate in L-arginine biosynthesis pathway, and a branchpoint in the synthesis of polyamines.</text>
</comment>
<comment type="catalytic activity">
    <reaction evidence="1">
        <text>N(2)-acetyl-L-ornithine + H2O = L-ornithine + acetate</text>
        <dbReference type="Rhea" id="RHEA:15941"/>
        <dbReference type="ChEBI" id="CHEBI:15377"/>
        <dbReference type="ChEBI" id="CHEBI:30089"/>
        <dbReference type="ChEBI" id="CHEBI:46911"/>
        <dbReference type="ChEBI" id="CHEBI:57805"/>
        <dbReference type="EC" id="3.5.1.16"/>
    </reaction>
</comment>
<comment type="cofactor">
    <cofactor evidence="1">
        <name>Zn(2+)</name>
        <dbReference type="ChEBI" id="CHEBI:29105"/>
    </cofactor>
    <cofactor evidence="1">
        <name>Co(2+)</name>
        <dbReference type="ChEBI" id="CHEBI:48828"/>
    </cofactor>
    <text evidence="1">Binds 2 Zn(2+) or Co(2+) ions per subunit.</text>
</comment>
<comment type="cofactor">
    <cofactor evidence="1">
        <name>glutathione</name>
        <dbReference type="ChEBI" id="CHEBI:57925"/>
    </cofactor>
</comment>
<comment type="pathway">
    <text evidence="1">Amino-acid biosynthesis; L-arginine biosynthesis; L-ornithine from N(2)-acetyl-L-ornithine (linear): step 1/1.</text>
</comment>
<comment type="subunit">
    <text evidence="1">Homodimer.</text>
</comment>
<comment type="subcellular location">
    <subcellularLocation>
        <location evidence="1">Cytoplasm</location>
    </subcellularLocation>
</comment>
<comment type="similarity">
    <text evidence="1">Belongs to the peptidase M20A family. ArgE subfamily.</text>
</comment>
<keyword id="KW-0028">Amino-acid biosynthesis</keyword>
<keyword id="KW-0055">Arginine biosynthesis</keyword>
<keyword id="KW-0170">Cobalt</keyword>
<keyword id="KW-0963">Cytoplasm</keyword>
<keyword id="KW-0378">Hydrolase</keyword>
<keyword id="KW-0479">Metal-binding</keyword>
<keyword id="KW-0862">Zinc</keyword>
<name>ARGE_SHIBS</name>
<proteinExistence type="inferred from homology"/>
<gene>
    <name evidence="1" type="primary">argE</name>
    <name type="ordered locus">SBO_3976</name>
</gene>
<dbReference type="EC" id="3.5.1.16" evidence="1"/>
<dbReference type="EMBL" id="CP000036">
    <property type="protein sequence ID" value="ABB68427.1"/>
    <property type="molecule type" value="Genomic_DNA"/>
</dbReference>
<dbReference type="RefSeq" id="WP_004987941.1">
    <property type="nucleotide sequence ID" value="NC_007613.1"/>
</dbReference>
<dbReference type="SMR" id="Q31U31"/>
<dbReference type="MEROPS" id="M20.974"/>
<dbReference type="KEGG" id="sbo:SBO_3976"/>
<dbReference type="HOGENOM" id="CLU_021802_2_4_6"/>
<dbReference type="UniPathway" id="UPA00068">
    <property type="reaction ID" value="UER00110"/>
</dbReference>
<dbReference type="Proteomes" id="UP000007067">
    <property type="component" value="Chromosome"/>
</dbReference>
<dbReference type="GO" id="GO:0005737">
    <property type="term" value="C:cytoplasm"/>
    <property type="evidence" value="ECO:0007669"/>
    <property type="project" value="UniProtKB-SubCell"/>
</dbReference>
<dbReference type="GO" id="GO:0008777">
    <property type="term" value="F:acetylornithine deacetylase activity"/>
    <property type="evidence" value="ECO:0007669"/>
    <property type="project" value="UniProtKB-UniRule"/>
</dbReference>
<dbReference type="GO" id="GO:0008270">
    <property type="term" value="F:zinc ion binding"/>
    <property type="evidence" value="ECO:0007669"/>
    <property type="project" value="UniProtKB-UniRule"/>
</dbReference>
<dbReference type="GO" id="GO:0006526">
    <property type="term" value="P:L-arginine biosynthetic process"/>
    <property type="evidence" value="ECO:0007669"/>
    <property type="project" value="UniProtKB-UniRule"/>
</dbReference>
<dbReference type="CDD" id="cd03894">
    <property type="entry name" value="M20_ArgE"/>
    <property type="match status" value="1"/>
</dbReference>
<dbReference type="FunFam" id="3.30.70.360:FF:000003">
    <property type="entry name" value="Acetylornithine deacetylase"/>
    <property type="match status" value="1"/>
</dbReference>
<dbReference type="Gene3D" id="3.30.70.360">
    <property type="match status" value="1"/>
</dbReference>
<dbReference type="Gene3D" id="3.40.630.10">
    <property type="entry name" value="Zn peptidases"/>
    <property type="match status" value="1"/>
</dbReference>
<dbReference type="HAMAP" id="MF_01108">
    <property type="entry name" value="ArgE"/>
    <property type="match status" value="1"/>
</dbReference>
<dbReference type="InterPro" id="IPR010169">
    <property type="entry name" value="AcOrn-deacetyl"/>
</dbReference>
<dbReference type="InterPro" id="IPR001261">
    <property type="entry name" value="ArgE/DapE_CS"/>
</dbReference>
<dbReference type="InterPro" id="IPR036264">
    <property type="entry name" value="Bact_exopeptidase_dim_dom"/>
</dbReference>
<dbReference type="InterPro" id="IPR002933">
    <property type="entry name" value="Peptidase_M20"/>
</dbReference>
<dbReference type="InterPro" id="IPR011650">
    <property type="entry name" value="Peptidase_M20_dimer"/>
</dbReference>
<dbReference type="InterPro" id="IPR050072">
    <property type="entry name" value="Peptidase_M20A"/>
</dbReference>
<dbReference type="NCBIfam" id="TIGR01892">
    <property type="entry name" value="AcOrn-deacetyl"/>
    <property type="match status" value="1"/>
</dbReference>
<dbReference type="NCBIfam" id="NF003474">
    <property type="entry name" value="PRK05111.1"/>
    <property type="match status" value="1"/>
</dbReference>
<dbReference type="PANTHER" id="PTHR43808">
    <property type="entry name" value="ACETYLORNITHINE DEACETYLASE"/>
    <property type="match status" value="1"/>
</dbReference>
<dbReference type="PANTHER" id="PTHR43808:SF1">
    <property type="entry name" value="ACETYLORNITHINE DEACETYLASE"/>
    <property type="match status" value="1"/>
</dbReference>
<dbReference type="Pfam" id="PF07687">
    <property type="entry name" value="M20_dimer"/>
    <property type="match status" value="1"/>
</dbReference>
<dbReference type="Pfam" id="PF01546">
    <property type="entry name" value="Peptidase_M20"/>
    <property type="match status" value="1"/>
</dbReference>
<dbReference type="SUPFAM" id="SSF55031">
    <property type="entry name" value="Bacterial exopeptidase dimerisation domain"/>
    <property type="match status" value="1"/>
</dbReference>
<dbReference type="SUPFAM" id="SSF53187">
    <property type="entry name" value="Zn-dependent exopeptidases"/>
    <property type="match status" value="1"/>
</dbReference>
<dbReference type="PROSITE" id="PS00758">
    <property type="entry name" value="ARGE_DAPE_CPG2_1"/>
    <property type="match status" value="1"/>
</dbReference>
<dbReference type="PROSITE" id="PS00759">
    <property type="entry name" value="ARGE_DAPE_CPG2_2"/>
    <property type="match status" value="1"/>
</dbReference>
<feature type="chain" id="PRO_1000065061" description="Acetylornithine deacetylase">
    <location>
        <begin position="1"/>
        <end position="383"/>
    </location>
</feature>
<feature type="active site" evidence="1">
    <location>
        <position position="82"/>
    </location>
</feature>
<feature type="active site" evidence="1">
    <location>
        <position position="144"/>
    </location>
</feature>
<feature type="binding site" evidence="1">
    <location>
        <position position="80"/>
    </location>
    <ligand>
        <name>Zn(2+)</name>
        <dbReference type="ChEBI" id="CHEBI:29105"/>
        <label>1</label>
    </ligand>
</feature>
<feature type="binding site" evidence="1">
    <location>
        <position position="112"/>
    </location>
    <ligand>
        <name>Zn(2+)</name>
        <dbReference type="ChEBI" id="CHEBI:29105"/>
        <label>1</label>
    </ligand>
</feature>
<feature type="binding site" evidence="1">
    <location>
        <position position="112"/>
    </location>
    <ligand>
        <name>Zn(2+)</name>
        <dbReference type="ChEBI" id="CHEBI:29105"/>
        <label>2</label>
    </ligand>
</feature>
<feature type="binding site" evidence="1">
    <location>
        <position position="145"/>
    </location>
    <ligand>
        <name>Zn(2+)</name>
        <dbReference type="ChEBI" id="CHEBI:29105"/>
        <label>2</label>
    </ligand>
</feature>
<feature type="binding site" evidence="1">
    <location>
        <position position="169"/>
    </location>
    <ligand>
        <name>Zn(2+)</name>
        <dbReference type="ChEBI" id="CHEBI:29105"/>
        <label>1</label>
    </ligand>
</feature>
<feature type="binding site" evidence="1">
    <location>
        <position position="355"/>
    </location>
    <ligand>
        <name>Zn(2+)</name>
        <dbReference type="ChEBI" id="CHEBI:29105"/>
        <label>2</label>
    </ligand>
</feature>
<sequence>MKNKLPPFIEIYRALIATPSISATEEALDQSNADLITLLADWFKDLGFNVEVQPVPGTRNKFNMLASIGQGAGGLLLAGHTDTVPFDDGRWTRDPFTLTEHDGKLYGLGTADMKGFFAFILDALRDIDVTKLKKPLYILATADEETSMAGARYFAETTALRPDCAIIGEPTSLQPVRAHKGHISNAIRIQGQSGHSSDPARGVNAIELMHDAIGHILQLRDNLKERYHYEAFTVPYPTLNLGHIHGGDASNRICACCELHMDIRPLPGMTLNELNGLLNDALAPVIERWPGRLTVDELHPPIPGYECPPNHQLVEVVEKLLGAKTEVVNYCTEAPFIQTLCPTLVLGPGSINQAHQPDEYLETRFIKPTRELIIQVIHHFCWH</sequence>
<protein>
    <recommendedName>
        <fullName evidence="1">Acetylornithine deacetylase</fullName>
        <shortName evidence="1">AO</shortName>
        <shortName evidence="1">Acetylornithinase</shortName>
        <ecNumber evidence="1">3.5.1.16</ecNumber>
    </recommendedName>
    <alternativeName>
        <fullName evidence="1">N-acetylornithinase</fullName>
        <shortName evidence="1">NAO</shortName>
    </alternativeName>
</protein>
<accession>Q31U31</accession>
<organism>
    <name type="scientific">Shigella boydii serotype 4 (strain Sb227)</name>
    <dbReference type="NCBI Taxonomy" id="300268"/>
    <lineage>
        <taxon>Bacteria</taxon>
        <taxon>Pseudomonadati</taxon>
        <taxon>Pseudomonadota</taxon>
        <taxon>Gammaproteobacteria</taxon>
        <taxon>Enterobacterales</taxon>
        <taxon>Enterobacteriaceae</taxon>
        <taxon>Shigella</taxon>
    </lineage>
</organism>
<reference key="1">
    <citation type="journal article" date="2005" name="Nucleic Acids Res.">
        <title>Genome dynamics and diversity of Shigella species, the etiologic agents of bacillary dysentery.</title>
        <authorList>
            <person name="Yang F."/>
            <person name="Yang J."/>
            <person name="Zhang X."/>
            <person name="Chen L."/>
            <person name="Jiang Y."/>
            <person name="Yan Y."/>
            <person name="Tang X."/>
            <person name="Wang J."/>
            <person name="Xiong Z."/>
            <person name="Dong J."/>
            <person name="Xue Y."/>
            <person name="Zhu Y."/>
            <person name="Xu X."/>
            <person name="Sun L."/>
            <person name="Chen S."/>
            <person name="Nie H."/>
            <person name="Peng J."/>
            <person name="Xu J."/>
            <person name="Wang Y."/>
            <person name="Yuan Z."/>
            <person name="Wen Y."/>
            <person name="Yao Z."/>
            <person name="Shen Y."/>
            <person name="Qiang B."/>
            <person name="Hou Y."/>
            <person name="Yu J."/>
            <person name="Jin Q."/>
        </authorList>
    </citation>
    <scope>NUCLEOTIDE SEQUENCE [LARGE SCALE GENOMIC DNA]</scope>
    <source>
        <strain>Sb227</strain>
    </source>
</reference>
<evidence type="ECO:0000255" key="1">
    <source>
        <dbReference type="HAMAP-Rule" id="MF_01108"/>
    </source>
</evidence>